<dbReference type="EC" id="2.3.1.180" evidence="1"/>
<dbReference type="EMBL" id="CP000613">
    <property type="protein sequence ID" value="ACI98731.1"/>
    <property type="molecule type" value="Genomic_DNA"/>
</dbReference>
<dbReference type="RefSeq" id="WP_012566518.1">
    <property type="nucleotide sequence ID" value="NC_011420.2"/>
</dbReference>
<dbReference type="SMR" id="B6IMR5"/>
<dbReference type="STRING" id="414684.RC1_1327"/>
<dbReference type="KEGG" id="rce:RC1_1327"/>
<dbReference type="eggNOG" id="COG0332">
    <property type="taxonomic scope" value="Bacteria"/>
</dbReference>
<dbReference type="HOGENOM" id="CLU_039592_3_1_5"/>
<dbReference type="OrthoDB" id="9815506at2"/>
<dbReference type="UniPathway" id="UPA00094"/>
<dbReference type="Proteomes" id="UP000001591">
    <property type="component" value="Chromosome"/>
</dbReference>
<dbReference type="GO" id="GO:0005737">
    <property type="term" value="C:cytoplasm"/>
    <property type="evidence" value="ECO:0007669"/>
    <property type="project" value="UniProtKB-SubCell"/>
</dbReference>
<dbReference type="GO" id="GO:0004315">
    <property type="term" value="F:3-oxoacyl-[acyl-carrier-protein] synthase activity"/>
    <property type="evidence" value="ECO:0007669"/>
    <property type="project" value="InterPro"/>
</dbReference>
<dbReference type="GO" id="GO:0033818">
    <property type="term" value="F:beta-ketoacyl-acyl-carrier-protein synthase III activity"/>
    <property type="evidence" value="ECO:0007669"/>
    <property type="project" value="UniProtKB-UniRule"/>
</dbReference>
<dbReference type="GO" id="GO:0006633">
    <property type="term" value="P:fatty acid biosynthetic process"/>
    <property type="evidence" value="ECO:0007669"/>
    <property type="project" value="UniProtKB-UniRule"/>
</dbReference>
<dbReference type="CDD" id="cd00830">
    <property type="entry name" value="KAS_III"/>
    <property type="match status" value="1"/>
</dbReference>
<dbReference type="FunFam" id="3.40.47.10:FF:000004">
    <property type="entry name" value="3-oxoacyl-[acyl-carrier-protein] synthase 3"/>
    <property type="match status" value="1"/>
</dbReference>
<dbReference type="Gene3D" id="3.40.47.10">
    <property type="match status" value="1"/>
</dbReference>
<dbReference type="HAMAP" id="MF_01815">
    <property type="entry name" value="FabH"/>
    <property type="match status" value="1"/>
</dbReference>
<dbReference type="InterPro" id="IPR013747">
    <property type="entry name" value="ACP_syn_III_C"/>
</dbReference>
<dbReference type="InterPro" id="IPR013751">
    <property type="entry name" value="ACP_syn_III_N"/>
</dbReference>
<dbReference type="InterPro" id="IPR004655">
    <property type="entry name" value="FabH"/>
</dbReference>
<dbReference type="InterPro" id="IPR016039">
    <property type="entry name" value="Thiolase-like"/>
</dbReference>
<dbReference type="NCBIfam" id="TIGR00747">
    <property type="entry name" value="fabH"/>
    <property type="match status" value="1"/>
</dbReference>
<dbReference type="NCBIfam" id="NF006829">
    <property type="entry name" value="PRK09352.1"/>
    <property type="match status" value="1"/>
</dbReference>
<dbReference type="PANTHER" id="PTHR43091">
    <property type="entry name" value="3-OXOACYL-[ACYL-CARRIER-PROTEIN] SYNTHASE"/>
    <property type="match status" value="1"/>
</dbReference>
<dbReference type="PANTHER" id="PTHR43091:SF1">
    <property type="entry name" value="BETA-KETOACYL-[ACYL-CARRIER-PROTEIN] SYNTHASE III, CHLOROPLASTIC"/>
    <property type="match status" value="1"/>
</dbReference>
<dbReference type="Pfam" id="PF08545">
    <property type="entry name" value="ACP_syn_III"/>
    <property type="match status" value="1"/>
</dbReference>
<dbReference type="Pfam" id="PF08541">
    <property type="entry name" value="ACP_syn_III_C"/>
    <property type="match status" value="1"/>
</dbReference>
<dbReference type="SUPFAM" id="SSF53901">
    <property type="entry name" value="Thiolase-like"/>
    <property type="match status" value="1"/>
</dbReference>
<organism>
    <name type="scientific">Rhodospirillum centenum (strain ATCC 51521 / SW)</name>
    <dbReference type="NCBI Taxonomy" id="414684"/>
    <lineage>
        <taxon>Bacteria</taxon>
        <taxon>Pseudomonadati</taxon>
        <taxon>Pseudomonadota</taxon>
        <taxon>Alphaproteobacteria</taxon>
        <taxon>Rhodospirillales</taxon>
        <taxon>Rhodospirillaceae</taxon>
        <taxon>Rhodospirillum</taxon>
    </lineage>
</organism>
<comment type="function">
    <text evidence="1">Catalyzes the condensation reaction of fatty acid synthesis by the addition to an acyl acceptor of two carbons from malonyl-ACP. Catalyzes the first condensation reaction which initiates fatty acid synthesis and may therefore play a role in governing the total rate of fatty acid production. Possesses both acetoacetyl-ACP synthase and acetyl transacylase activities. Its substrate specificity determines the biosynthesis of branched-chain and/or straight-chain of fatty acids.</text>
</comment>
<comment type="catalytic activity">
    <reaction evidence="1">
        <text>malonyl-[ACP] + acetyl-CoA + H(+) = 3-oxobutanoyl-[ACP] + CO2 + CoA</text>
        <dbReference type="Rhea" id="RHEA:12080"/>
        <dbReference type="Rhea" id="RHEA-COMP:9623"/>
        <dbReference type="Rhea" id="RHEA-COMP:9625"/>
        <dbReference type="ChEBI" id="CHEBI:15378"/>
        <dbReference type="ChEBI" id="CHEBI:16526"/>
        <dbReference type="ChEBI" id="CHEBI:57287"/>
        <dbReference type="ChEBI" id="CHEBI:57288"/>
        <dbReference type="ChEBI" id="CHEBI:78449"/>
        <dbReference type="ChEBI" id="CHEBI:78450"/>
        <dbReference type="EC" id="2.3.1.180"/>
    </reaction>
</comment>
<comment type="pathway">
    <text evidence="1">Lipid metabolism; fatty acid biosynthesis.</text>
</comment>
<comment type="subunit">
    <text evidence="1">Homodimer.</text>
</comment>
<comment type="subcellular location">
    <subcellularLocation>
        <location evidence="1">Cytoplasm</location>
    </subcellularLocation>
</comment>
<comment type="domain">
    <text evidence="1">The last Arg residue of the ACP-binding site is essential for the weak association between ACP/AcpP and FabH.</text>
</comment>
<comment type="similarity">
    <text evidence="1">Belongs to the thiolase-like superfamily. FabH family.</text>
</comment>
<feature type="chain" id="PRO_1000215999" description="Beta-ketoacyl-[acyl-carrier-protein] synthase III">
    <location>
        <begin position="1"/>
        <end position="323"/>
    </location>
</feature>
<feature type="region of interest" description="ACP-binding" evidence="1">
    <location>
        <begin position="251"/>
        <end position="255"/>
    </location>
</feature>
<feature type="active site" evidence="1">
    <location>
        <position position="114"/>
    </location>
</feature>
<feature type="active site" evidence="1">
    <location>
        <position position="250"/>
    </location>
</feature>
<feature type="active site" evidence="1">
    <location>
        <position position="280"/>
    </location>
</feature>
<evidence type="ECO:0000255" key="1">
    <source>
        <dbReference type="HAMAP-Rule" id="MF_01815"/>
    </source>
</evidence>
<sequence length="323" mass="34241">MPLRSVILGCGAYLPARVLTNEDLTRIVETSDEWIVERTGIKSRHIAADGENTSDLAEAAARAALAHAGVAAEEVDLIVLATATPDQTFPATATKVQARLGITRGAAFDVQAVCSGFVYALAIADNFIKAGQARTALVIGAETFSRILDWTDRTTCVLFGDGAGAVVLRAEEGEGTADRGILSTHLHSDGRHHDLLYVDGGPSTTQTVGHLRMKGQEVFKHAVVNLAHVVEEALAANGLSPADISWLVPHQANRRIIESTARKLKLDGSRVVLTVDHHGNTSAASIPLALCEAVHDGRVQRGDIVLLEAMGGGFTWGAALVRW</sequence>
<name>FABH_RHOCS</name>
<proteinExistence type="inferred from homology"/>
<accession>B6IMR5</accession>
<gene>
    <name evidence="1" type="primary">fabH</name>
    <name type="ordered locus">RC1_1327</name>
</gene>
<keyword id="KW-0012">Acyltransferase</keyword>
<keyword id="KW-0963">Cytoplasm</keyword>
<keyword id="KW-0275">Fatty acid biosynthesis</keyword>
<keyword id="KW-0276">Fatty acid metabolism</keyword>
<keyword id="KW-0444">Lipid biosynthesis</keyword>
<keyword id="KW-0443">Lipid metabolism</keyword>
<keyword id="KW-0511">Multifunctional enzyme</keyword>
<keyword id="KW-1185">Reference proteome</keyword>
<keyword id="KW-0808">Transferase</keyword>
<protein>
    <recommendedName>
        <fullName evidence="1">Beta-ketoacyl-[acyl-carrier-protein] synthase III</fullName>
        <shortName evidence="1">Beta-ketoacyl-ACP synthase III</shortName>
        <shortName evidence="1">KAS III</shortName>
        <ecNumber evidence="1">2.3.1.180</ecNumber>
    </recommendedName>
    <alternativeName>
        <fullName evidence="1">3-oxoacyl-[acyl-carrier-protein] synthase 3</fullName>
    </alternativeName>
    <alternativeName>
        <fullName evidence="1">3-oxoacyl-[acyl-carrier-protein] synthase III</fullName>
    </alternativeName>
</protein>
<reference key="1">
    <citation type="submission" date="2007-03" db="EMBL/GenBank/DDBJ databases">
        <title>Genome sequence of Rhodospirillum centenum.</title>
        <authorList>
            <person name="Touchman J.W."/>
            <person name="Bauer C."/>
            <person name="Blankenship R.E."/>
        </authorList>
    </citation>
    <scope>NUCLEOTIDE SEQUENCE [LARGE SCALE GENOMIC DNA]</scope>
    <source>
        <strain>ATCC 51521 / SW</strain>
    </source>
</reference>